<keyword id="KW-0963">Cytoplasm</keyword>
<keyword id="KW-0312">Gluconeogenesis</keyword>
<keyword id="KW-0324">Glycolysis</keyword>
<keyword id="KW-0413">Isomerase</keyword>
<keyword id="KW-1185">Reference proteome</keyword>
<reference key="1">
    <citation type="submission" date="2007-08" db="EMBL/GenBank/DDBJ databases">
        <title>Complete sequence of Roseiflexus castenholzii DSM 13941.</title>
        <authorList>
            <consortium name="US DOE Joint Genome Institute"/>
            <person name="Copeland A."/>
            <person name="Lucas S."/>
            <person name="Lapidus A."/>
            <person name="Barry K."/>
            <person name="Glavina del Rio T."/>
            <person name="Dalin E."/>
            <person name="Tice H."/>
            <person name="Pitluck S."/>
            <person name="Thompson L.S."/>
            <person name="Brettin T."/>
            <person name="Bruce D."/>
            <person name="Detter J.C."/>
            <person name="Han C."/>
            <person name="Tapia R."/>
            <person name="Schmutz J."/>
            <person name="Larimer F."/>
            <person name="Land M."/>
            <person name="Hauser L."/>
            <person name="Kyrpides N."/>
            <person name="Mikhailova N."/>
            <person name="Bryant D.A."/>
            <person name="Hanada S."/>
            <person name="Tsukatani Y."/>
            <person name="Richardson P."/>
        </authorList>
    </citation>
    <scope>NUCLEOTIDE SEQUENCE [LARGE SCALE GENOMIC DNA]</scope>
    <source>
        <strain>DSM 13941 / HLO8</strain>
    </source>
</reference>
<gene>
    <name evidence="1" type="primary">tpiA</name>
    <name type="ordered locus">Rcas_0991</name>
</gene>
<organism>
    <name type="scientific">Roseiflexus castenholzii (strain DSM 13941 / HLO8)</name>
    <dbReference type="NCBI Taxonomy" id="383372"/>
    <lineage>
        <taxon>Bacteria</taxon>
        <taxon>Bacillati</taxon>
        <taxon>Chloroflexota</taxon>
        <taxon>Chloroflexia</taxon>
        <taxon>Chloroflexales</taxon>
        <taxon>Roseiflexineae</taxon>
        <taxon>Roseiflexaceae</taxon>
        <taxon>Roseiflexus</taxon>
    </lineage>
</organism>
<feature type="chain" id="PRO_1000076657" description="Triosephosphate isomerase">
    <location>
        <begin position="1"/>
        <end position="254"/>
    </location>
</feature>
<feature type="active site" description="Electrophile" evidence="1">
    <location>
        <position position="95"/>
    </location>
</feature>
<feature type="active site" description="Proton acceptor" evidence="1">
    <location>
        <position position="167"/>
    </location>
</feature>
<feature type="binding site" evidence="1">
    <location>
        <begin position="9"/>
        <end position="11"/>
    </location>
    <ligand>
        <name>substrate</name>
    </ligand>
</feature>
<feature type="binding site" evidence="1">
    <location>
        <position position="173"/>
    </location>
    <ligand>
        <name>substrate</name>
    </ligand>
</feature>
<feature type="binding site" evidence="1">
    <location>
        <position position="213"/>
    </location>
    <ligand>
        <name>substrate</name>
    </ligand>
</feature>
<feature type="binding site" evidence="1">
    <location>
        <begin position="234"/>
        <end position="235"/>
    </location>
    <ligand>
        <name>substrate</name>
    </ligand>
</feature>
<accession>A7NI03</accession>
<dbReference type="EC" id="5.3.1.1" evidence="1"/>
<dbReference type="EMBL" id="CP000804">
    <property type="protein sequence ID" value="ABU57100.1"/>
    <property type="molecule type" value="Genomic_DNA"/>
</dbReference>
<dbReference type="RefSeq" id="WP_012119530.1">
    <property type="nucleotide sequence ID" value="NC_009767.1"/>
</dbReference>
<dbReference type="SMR" id="A7NI03"/>
<dbReference type="STRING" id="383372.Rcas_0991"/>
<dbReference type="KEGG" id="rca:Rcas_0991"/>
<dbReference type="eggNOG" id="COG0149">
    <property type="taxonomic scope" value="Bacteria"/>
</dbReference>
<dbReference type="HOGENOM" id="CLU_024251_2_3_0"/>
<dbReference type="OrthoDB" id="9809429at2"/>
<dbReference type="UniPathway" id="UPA00109">
    <property type="reaction ID" value="UER00189"/>
</dbReference>
<dbReference type="UniPathway" id="UPA00138"/>
<dbReference type="Proteomes" id="UP000000263">
    <property type="component" value="Chromosome"/>
</dbReference>
<dbReference type="GO" id="GO:0005829">
    <property type="term" value="C:cytosol"/>
    <property type="evidence" value="ECO:0007669"/>
    <property type="project" value="TreeGrafter"/>
</dbReference>
<dbReference type="GO" id="GO:0004807">
    <property type="term" value="F:triose-phosphate isomerase activity"/>
    <property type="evidence" value="ECO:0007669"/>
    <property type="project" value="UniProtKB-UniRule"/>
</dbReference>
<dbReference type="GO" id="GO:0006094">
    <property type="term" value="P:gluconeogenesis"/>
    <property type="evidence" value="ECO:0007669"/>
    <property type="project" value="UniProtKB-UniRule"/>
</dbReference>
<dbReference type="GO" id="GO:0046166">
    <property type="term" value="P:glyceraldehyde-3-phosphate biosynthetic process"/>
    <property type="evidence" value="ECO:0007669"/>
    <property type="project" value="TreeGrafter"/>
</dbReference>
<dbReference type="GO" id="GO:0019563">
    <property type="term" value="P:glycerol catabolic process"/>
    <property type="evidence" value="ECO:0007669"/>
    <property type="project" value="TreeGrafter"/>
</dbReference>
<dbReference type="GO" id="GO:0006096">
    <property type="term" value="P:glycolytic process"/>
    <property type="evidence" value="ECO:0007669"/>
    <property type="project" value="UniProtKB-UniRule"/>
</dbReference>
<dbReference type="CDD" id="cd00311">
    <property type="entry name" value="TIM"/>
    <property type="match status" value="1"/>
</dbReference>
<dbReference type="FunFam" id="3.20.20.70:FF:000016">
    <property type="entry name" value="Triosephosphate isomerase"/>
    <property type="match status" value="1"/>
</dbReference>
<dbReference type="Gene3D" id="3.20.20.70">
    <property type="entry name" value="Aldolase class I"/>
    <property type="match status" value="1"/>
</dbReference>
<dbReference type="HAMAP" id="MF_00147_B">
    <property type="entry name" value="TIM_B"/>
    <property type="match status" value="1"/>
</dbReference>
<dbReference type="InterPro" id="IPR013785">
    <property type="entry name" value="Aldolase_TIM"/>
</dbReference>
<dbReference type="InterPro" id="IPR035990">
    <property type="entry name" value="TIM_sf"/>
</dbReference>
<dbReference type="InterPro" id="IPR022896">
    <property type="entry name" value="TrioseP_Isoase_bac/euk"/>
</dbReference>
<dbReference type="InterPro" id="IPR000652">
    <property type="entry name" value="Triosephosphate_isomerase"/>
</dbReference>
<dbReference type="InterPro" id="IPR020861">
    <property type="entry name" value="Triosephosphate_isomerase_AS"/>
</dbReference>
<dbReference type="NCBIfam" id="TIGR00419">
    <property type="entry name" value="tim"/>
    <property type="match status" value="1"/>
</dbReference>
<dbReference type="PANTHER" id="PTHR21139">
    <property type="entry name" value="TRIOSEPHOSPHATE ISOMERASE"/>
    <property type="match status" value="1"/>
</dbReference>
<dbReference type="PANTHER" id="PTHR21139:SF42">
    <property type="entry name" value="TRIOSEPHOSPHATE ISOMERASE"/>
    <property type="match status" value="1"/>
</dbReference>
<dbReference type="Pfam" id="PF00121">
    <property type="entry name" value="TIM"/>
    <property type="match status" value="1"/>
</dbReference>
<dbReference type="SUPFAM" id="SSF51351">
    <property type="entry name" value="Triosephosphate isomerase (TIM)"/>
    <property type="match status" value="1"/>
</dbReference>
<dbReference type="PROSITE" id="PS00171">
    <property type="entry name" value="TIM_1"/>
    <property type="match status" value="1"/>
</dbReference>
<dbReference type="PROSITE" id="PS51440">
    <property type="entry name" value="TIM_2"/>
    <property type="match status" value="1"/>
</dbReference>
<proteinExistence type="inferred from homology"/>
<sequence length="254" mass="26913">MRTPLLAGNWKMYKTTGEARELVEGLLHGLGDVGDRKVLVCPPFTALQTVHDLVQGTPIALGAQDVYIEPQGAFTGAISPVMLRDLGCAYVIVGHSERRAIFGEGDELIGKKVRAALAHDLTPILCVGETKPQRDAGHAETVVVAQVRAALTGMTPEQIGRIVIAYEPVWAIGTGDTATPADAQAMHETIRRILGDMAGSDTAATINILYGGSVKPDNIDDLMAQPDIDGALVGGASLKADSFLRIVHFLSPQE</sequence>
<protein>
    <recommendedName>
        <fullName evidence="1">Triosephosphate isomerase</fullName>
        <shortName evidence="1">TIM</shortName>
        <shortName evidence="1">TPI</shortName>
        <ecNumber evidence="1">5.3.1.1</ecNumber>
    </recommendedName>
    <alternativeName>
        <fullName evidence="1">Triose-phosphate isomerase</fullName>
    </alternativeName>
</protein>
<comment type="function">
    <text evidence="1">Involved in the gluconeogenesis. Catalyzes stereospecifically the conversion of dihydroxyacetone phosphate (DHAP) to D-glyceraldehyde-3-phosphate (G3P).</text>
</comment>
<comment type="catalytic activity">
    <reaction evidence="1">
        <text>D-glyceraldehyde 3-phosphate = dihydroxyacetone phosphate</text>
        <dbReference type="Rhea" id="RHEA:18585"/>
        <dbReference type="ChEBI" id="CHEBI:57642"/>
        <dbReference type="ChEBI" id="CHEBI:59776"/>
        <dbReference type="EC" id="5.3.1.1"/>
    </reaction>
</comment>
<comment type="pathway">
    <text evidence="1">Carbohydrate biosynthesis; gluconeogenesis.</text>
</comment>
<comment type="pathway">
    <text evidence="1">Carbohydrate degradation; glycolysis; D-glyceraldehyde 3-phosphate from glycerone phosphate: step 1/1.</text>
</comment>
<comment type="subunit">
    <text evidence="1">Homodimer.</text>
</comment>
<comment type="subcellular location">
    <subcellularLocation>
        <location evidence="1">Cytoplasm</location>
    </subcellularLocation>
</comment>
<comment type="similarity">
    <text evidence="1">Belongs to the triosephosphate isomerase family.</text>
</comment>
<name>TPIS_ROSCS</name>
<evidence type="ECO:0000255" key="1">
    <source>
        <dbReference type="HAMAP-Rule" id="MF_00147"/>
    </source>
</evidence>